<gene>
    <name type="primary">Nup93</name>
</gene>
<keyword id="KW-0472">Membrane</keyword>
<keyword id="KW-0509">mRNA transport</keyword>
<keyword id="KW-0906">Nuclear pore complex</keyword>
<keyword id="KW-0539">Nucleus</keyword>
<keyword id="KW-0597">Phosphoprotein</keyword>
<keyword id="KW-0653">Protein transport</keyword>
<keyword id="KW-1185">Reference proteome</keyword>
<keyword id="KW-0811">Translocation</keyword>
<keyword id="KW-0813">Transport</keyword>
<name>NUP93_RAT</name>
<comment type="function">
    <text evidence="2">Plays a role in the nuclear pore complex (NPC) assembly and/or maintenance. May anchor nucleoporins, but not NUP153 and TPR, to the NPC. During renal development, regulates podocyte migration and proliferation through SMAD4 signaling.</text>
</comment>
<comment type="subunit">
    <text evidence="2">Part of the nuclear pore complex (NPC). Component of the p62 complex, a complex composed of NUP62 and NUP54. Forms a complex with NUP35, NUP155, NUP205 and lamin B; the interaction with NUP35 is direct. Does not interact with TPR. Interacts with SMAD4 and IPO7; translocates SMAD4 to the nucleus through the NPC upon BMP7 stimulation resulting in activation of SMAD4 signaling.</text>
</comment>
<comment type="subcellular location">
    <subcellularLocation>
        <location evidence="3">Nucleus membrane</location>
        <topology evidence="3">Peripheral membrane protein</topology>
    </subcellularLocation>
    <subcellularLocation>
        <location evidence="2">Nucleus</location>
        <location evidence="2">Nuclear pore complex</location>
    </subcellularLocation>
    <subcellularLocation>
        <location evidence="2">Nucleus envelope</location>
    </subcellularLocation>
    <text evidence="1">Localizes at the nuclear basket and at or near the nuclear entry to the gated channel of the pore.</text>
</comment>
<comment type="similarity">
    <text evidence="4">Belongs to the nucleoporin interacting component (NIC) family.</text>
</comment>
<proteinExistence type="evidence at protein level"/>
<organism>
    <name type="scientific">Rattus norvegicus</name>
    <name type="common">Rat</name>
    <dbReference type="NCBI Taxonomy" id="10116"/>
    <lineage>
        <taxon>Eukaryota</taxon>
        <taxon>Metazoa</taxon>
        <taxon>Chordata</taxon>
        <taxon>Craniata</taxon>
        <taxon>Vertebrata</taxon>
        <taxon>Euteleostomi</taxon>
        <taxon>Mammalia</taxon>
        <taxon>Eutheria</taxon>
        <taxon>Euarchontoglires</taxon>
        <taxon>Glires</taxon>
        <taxon>Rodentia</taxon>
        <taxon>Myomorpha</taxon>
        <taxon>Muroidea</taxon>
        <taxon>Muridae</taxon>
        <taxon>Murinae</taxon>
        <taxon>Rattus</taxon>
    </lineage>
</organism>
<reference key="1">
    <citation type="journal article" date="2004" name="Genome Res.">
        <title>The status, quality, and expansion of the NIH full-length cDNA project: the Mammalian Gene Collection (MGC).</title>
        <authorList>
            <consortium name="The MGC Project Team"/>
        </authorList>
    </citation>
    <scope>NUCLEOTIDE SEQUENCE [LARGE SCALE MRNA]</scope>
    <source>
        <tissue>Testis</tissue>
    </source>
</reference>
<reference key="2">
    <citation type="journal article" date="2005" name="Mol. Biol. Cell">
        <title>Vertebrate Nup53 interacts with the nuclear lamina and is required for the assembly of a Nup93-containing complex.</title>
        <authorList>
            <person name="Hawryluk-Gara L.A."/>
            <person name="Shibuya E.K."/>
            <person name="Wozniak R.W."/>
        </authorList>
    </citation>
    <scope>SUBCELLULAR LOCATION</scope>
    <scope>IDENTIFICATION IN A COMPLEX WITH LAMIN B; NUP35; NUP155 AND NUP205</scope>
</reference>
<protein>
    <recommendedName>
        <fullName>Nuclear pore complex protein Nup93</fullName>
    </recommendedName>
    <alternativeName>
        <fullName>93 kDa nucleoporin</fullName>
    </alternativeName>
    <alternativeName>
        <fullName>Nucleoporin Nup93</fullName>
    </alternativeName>
</protein>
<feature type="chain" id="PRO_0000356296" description="Nuclear pore complex protein Nup93">
    <location>
        <begin position="1"/>
        <end position="819"/>
    </location>
</feature>
<feature type="modified residue" description="Phosphothreonine" evidence="2">
    <location>
        <position position="49"/>
    </location>
</feature>
<feature type="modified residue" description="Phosphoserine" evidence="2">
    <location>
        <position position="52"/>
    </location>
</feature>
<feature type="modified residue" description="Phosphoserine" evidence="2">
    <location>
        <position position="66"/>
    </location>
</feature>
<feature type="modified residue" description="Phosphoserine" evidence="2">
    <location>
        <position position="72"/>
    </location>
</feature>
<feature type="modified residue" description="Phosphoserine" evidence="2">
    <location>
        <position position="75"/>
    </location>
</feature>
<feature type="modified residue" description="Phosphoserine" evidence="2">
    <location>
        <position position="80"/>
    </location>
</feature>
<feature type="modified residue" description="Phosphoserine" evidence="2">
    <location>
        <position position="430"/>
    </location>
</feature>
<feature type="modified residue" description="Phosphoserine" evidence="2">
    <location>
        <position position="767"/>
    </location>
</feature>
<sequence>MDTEGFGELLQQAEQLAAETEGISELPHVERNLQEIQQAGERLRSRTLTRTSQETADVKASVLLGSRGLDISHISQRLESLSAATTFEPLEPVKDTDIQGFLKNEKDNALLSAIEESRKRTFGMAEEYHRESMLVEWEQVKQRILHTLLASGEDALDFTQESEPSYVSDVSPPGRSSLDSIEMAYARQIYIYNEKIVSGHLQPNLVDLCASVAELDDKSISDMWAMVKQMTDVVLTPATDALKSRSSVEVRMDFVKQALGYLEQSYKNYTLVTVFGNLHQAQLGGVPGTYQLVRSFLNIKLPAPSPGLQDGEVEGHPVWALIYYCMRCGDLLAASQVVSRAQHQLGEFKTWFQEYMNSKDRRLSPATENKLRLHYRRALRNNTDPYKRAVYCIIGRCDITDNQSEVADKTEDYLWLKLNQVCFDDDGTSSPQDRLTLSQFQKQLLEDYGESHFTVNQQPFLYFQVLFLTAQFEAAIAFLFRMERLRCHAVHVALVLFELKLLLKSSGQSAQLLSHEPGDPPCMRRLNFVRLLMLYTRKFESTDPREALQYFYFLRDEKDSQGENMFLRCVSELVIESREFDMILGKLENDGSRKPGVIDKFTSDTKPIINKVASVAENKGLFEEAAKLYDLAKNADKVLELMNKLLSPVVPQISAPQSNKERLKNMALSIAERYRAQGISANKFVDSTFYLLLDLITFFDEYHSGHIDRAFDIIDRLKLVPLNQESMEERVAAFRNFSDEIRHNLSEVLLATMNILFTQFKRLKGTSPSSATRPQRVIEDRDSQLRSQARALITFAGMIPYRTSGDTNARLVQMEVLMN</sequence>
<dbReference type="EMBL" id="BC081925">
    <property type="protein sequence ID" value="AAH81925.1"/>
    <property type="molecule type" value="mRNA"/>
</dbReference>
<dbReference type="RefSeq" id="NP_001011925.1">
    <property type="nucleotide sequence ID" value="NM_001011925.1"/>
</dbReference>
<dbReference type="RefSeq" id="XP_063133928.1">
    <property type="nucleotide sequence ID" value="XM_063277858.1"/>
</dbReference>
<dbReference type="SMR" id="Q66HC5"/>
<dbReference type="BioGRID" id="253671">
    <property type="interactions" value="3"/>
</dbReference>
<dbReference type="CORUM" id="Q66HC5"/>
<dbReference type="FunCoup" id="Q66HC5">
    <property type="interactions" value="4812"/>
</dbReference>
<dbReference type="STRING" id="10116.ENSRNOP00000025086"/>
<dbReference type="iPTMnet" id="Q66HC5"/>
<dbReference type="PhosphoSitePlus" id="Q66HC5"/>
<dbReference type="jPOST" id="Q66HC5"/>
<dbReference type="PaxDb" id="10116-ENSRNOP00000025086"/>
<dbReference type="Ensembl" id="ENSRNOT00000025086.7">
    <property type="protein sequence ID" value="ENSRNOP00000025086.5"/>
    <property type="gene ID" value="ENSRNOG00000018564.7"/>
</dbReference>
<dbReference type="GeneID" id="291874"/>
<dbReference type="KEGG" id="rno:291874"/>
<dbReference type="UCSC" id="RGD:1311525">
    <property type="organism name" value="rat"/>
</dbReference>
<dbReference type="AGR" id="RGD:1311525"/>
<dbReference type="CTD" id="9688"/>
<dbReference type="RGD" id="1311525">
    <property type="gene designation" value="Nup93"/>
</dbReference>
<dbReference type="eggNOG" id="KOG2168">
    <property type="taxonomic scope" value="Eukaryota"/>
</dbReference>
<dbReference type="GeneTree" id="ENSGT00390000016353"/>
<dbReference type="HOGENOM" id="CLU_011846_1_0_1"/>
<dbReference type="InParanoid" id="Q66HC5"/>
<dbReference type="OMA" id="LLMCGQF"/>
<dbReference type="OrthoDB" id="24185at9989"/>
<dbReference type="PhylomeDB" id="Q66HC5"/>
<dbReference type="Reactome" id="R-RNO-159227">
    <property type="pathway name" value="Transport of the SLBP independent Mature mRNA"/>
</dbReference>
<dbReference type="Reactome" id="R-RNO-159230">
    <property type="pathway name" value="Transport of the SLBP Dependant Mature mRNA"/>
</dbReference>
<dbReference type="Reactome" id="R-RNO-159231">
    <property type="pathway name" value="Transport of Mature mRNA Derived from an Intronless Transcript"/>
</dbReference>
<dbReference type="Reactome" id="R-RNO-159236">
    <property type="pathway name" value="Transport of Mature mRNA derived from an Intron-Containing Transcript"/>
</dbReference>
<dbReference type="Reactome" id="R-RNO-170822">
    <property type="pathway name" value="Regulation of Glucokinase by Glucokinase Regulatory Protein"/>
</dbReference>
<dbReference type="Reactome" id="R-RNO-191859">
    <property type="pathway name" value="snRNP Assembly"/>
</dbReference>
<dbReference type="Reactome" id="R-RNO-3108214">
    <property type="pathway name" value="SUMOylation of DNA damage response and repair proteins"/>
</dbReference>
<dbReference type="Reactome" id="R-RNO-3232142">
    <property type="pathway name" value="SUMOylation of ubiquitinylation proteins"/>
</dbReference>
<dbReference type="Reactome" id="R-RNO-3301854">
    <property type="pathway name" value="Nuclear Pore Complex (NPC) Disassembly"/>
</dbReference>
<dbReference type="Reactome" id="R-RNO-3371453">
    <property type="pathway name" value="Regulation of HSF1-mediated heat shock response"/>
</dbReference>
<dbReference type="Reactome" id="R-RNO-4085377">
    <property type="pathway name" value="SUMOylation of SUMOylation proteins"/>
</dbReference>
<dbReference type="Reactome" id="R-RNO-4551638">
    <property type="pathway name" value="SUMOylation of chromatin organization proteins"/>
</dbReference>
<dbReference type="Reactome" id="R-RNO-4570464">
    <property type="pathway name" value="SUMOylation of RNA binding proteins"/>
</dbReference>
<dbReference type="Reactome" id="R-RNO-4615885">
    <property type="pathway name" value="SUMOylation of DNA replication proteins"/>
</dbReference>
<dbReference type="Reactome" id="R-RNO-5578749">
    <property type="pathway name" value="Transcriptional regulation by small RNAs"/>
</dbReference>
<dbReference type="Reactome" id="R-RNO-9615933">
    <property type="pathway name" value="Postmitotic nuclear pore complex (NPC) reformation"/>
</dbReference>
<dbReference type="PRO" id="PR:Q66HC5"/>
<dbReference type="Proteomes" id="UP000002494">
    <property type="component" value="Chromosome 19"/>
</dbReference>
<dbReference type="Bgee" id="ENSRNOG00000018564">
    <property type="expression patterns" value="Expressed in thymus and 20 other cell types or tissues"/>
</dbReference>
<dbReference type="GO" id="GO:0005813">
    <property type="term" value="C:centrosome"/>
    <property type="evidence" value="ECO:0000266"/>
    <property type="project" value="RGD"/>
</dbReference>
<dbReference type="GO" id="GO:0005635">
    <property type="term" value="C:nuclear envelope"/>
    <property type="evidence" value="ECO:0000314"/>
    <property type="project" value="UniProtKB"/>
</dbReference>
<dbReference type="GO" id="GO:0031965">
    <property type="term" value="C:nuclear membrane"/>
    <property type="evidence" value="ECO:0000250"/>
    <property type="project" value="UniProtKB"/>
</dbReference>
<dbReference type="GO" id="GO:0034399">
    <property type="term" value="C:nuclear periphery"/>
    <property type="evidence" value="ECO:0000250"/>
    <property type="project" value="UniProtKB"/>
</dbReference>
<dbReference type="GO" id="GO:0005643">
    <property type="term" value="C:nuclear pore"/>
    <property type="evidence" value="ECO:0000250"/>
    <property type="project" value="UniProtKB"/>
</dbReference>
<dbReference type="GO" id="GO:0017056">
    <property type="term" value="F:structural constituent of nuclear pore"/>
    <property type="evidence" value="ECO:0000250"/>
    <property type="project" value="UniProtKB"/>
</dbReference>
<dbReference type="GO" id="GO:0006998">
    <property type="term" value="P:nuclear envelope organization"/>
    <property type="evidence" value="ECO:0000250"/>
    <property type="project" value="UniProtKB"/>
</dbReference>
<dbReference type="GO" id="GO:0051292">
    <property type="term" value="P:nuclear pore complex assembly"/>
    <property type="evidence" value="ECO:0000250"/>
    <property type="project" value="UniProtKB"/>
</dbReference>
<dbReference type="GO" id="GO:0016973">
    <property type="term" value="P:poly(A)+ mRNA export from nucleus"/>
    <property type="evidence" value="ECO:0000318"/>
    <property type="project" value="GO_Central"/>
</dbReference>
<dbReference type="GO" id="GO:0060391">
    <property type="term" value="P:positive regulation of SMAD protein signal transduction"/>
    <property type="evidence" value="ECO:0000250"/>
    <property type="project" value="UniProtKB"/>
</dbReference>
<dbReference type="GO" id="GO:0006606">
    <property type="term" value="P:protein import into nucleus"/>
    <property type="evidence" value="ECO:0000318"/>
    <property type="project" value="GO_Central"/>
</dbReference>
<dbReference type="InterPro" id="IPR007231">
    <property type="entry name" value="Nucleoporin_int_Nup93/Nic96"/>
</dbReference>
<dbReference type="PANTHER" id="PTHR11225:SF4">
    <property type="entry name" value="NUCLEAR PORE COMPLEX PROTEIN NUP93"/>
    <property type="match status" value="1"/>
</dbReference>
<dbReference type="PANTHER" id="PTHR11225">
    <property type="entry name" value="NUCLEAR PORE COMPLEX PROTEIN NUP93 NUCLEOPORIN NUP93 DEAD EYE PROTEIN"/>
    <property type="match status" value="1"/>
</dbReference>
<dbReference type="Pfam" id="PF04097">
    <property type="entry name" value="Nic96"/>
    <property type="match status" value="1"/>
</dbReference>
<evidence type="ECO:0000250" key="1"/>
<evidence type="ECO:0000250" key="2">
    <source>
        <dbReference type="UniProtKB" id="Q8N1F7"/>
    </source>
</evidence>
<evidence type="ECO:0000269" key="3">
    <source>
    </source>
</evidence>
<evidence type="ECO:0000305" key="4"/>
<accession>Q66HC5</accession>